<keyword id="KW-0002">3D-structure</keyword>
<keyword id="KW-0010">Activator</keyword>
<keyword id="KW-0238">DNA-binding</keyword>
<keyword id="KW-1185">Reference proteome</keyword>
<keyword id="KW-0678">Repressor</keyword>
<keyword id="KW-0749">Sporulation</keyword>
<keyword id="KW-0804">Transcription</keyword>
<keyword id="KW-0805">Transcription regulation</keyword>
<dbReference type="EMBL" id="D26185">
    <property type="protein sequence ID" value="BAA05291.1"/>
    <property type="molecule type" value="Genomic_DNA"/>
</dbReference>
<dbReference type="EMBL" id="AL009126">
    <property type="protein sequence ID" value="CAB11832.1"/>
    <property type="molecule type" value="Genomic_DNA"/>
</dbReference>
<dbReference type="PIR" id="F69716">
    <property type="entry name" value="F69716"/>
</dbReference>
<dbReference type="RefSeq" id="NP_387937.1">
    <property type="nucleotide sequence ID" value="NC_000964.3"/>
</dbReference>
<dbReference type="RefSeq" id="WP_003218365.1">
    <property type="nucleotide sequence ID" value="NZ_OZ025638.1"/>
</dbReference>
<dbReference type="PDB" id="2RO5">
    <property type="method" value="NMR"/>
    <property type="chains" value="A/B=1-55"/>
</dbReference>
<dbReference type="PDB" id="2W1R">
    <property type="method" value="X-ray"/>
    <property type="resolution" value="1.50 A"/>
    <property type="chains" value="A=56-178"/>
</dbReference>
<dbReference type="PDB" id="2W1T">
    <property type="method" value="X-ray"/>
    <property type="resolution" value="2.60 A"/>
    <property type="chains" value="A/B=1-178"/>
</dbReference>
<dbReference type="PDBsum" id="2RO5"/>
<dbReference type="PDBsum" id="2W1R"/>
<dbReference type="PDBsum" id="2W1T"/>
<dbReference type="BMRB" id="P37554"/>
<dbReference type="SMR" id="P37554"/>
<dbReference type="DIP" id="DIP-46335N"/>
<dbReference type="FunCoup" id="P37554">
    <property type="interactions" value="79"/>
</dbReference>
<dbReference type="STRING" id="224308.BSU00560"/>
<dbReference type="PaxDb" id="224308-BSU00560"/>
<dbReference type="EnsemblBacteria" id="CAB11832">
    <property type="protein sequence ID" value="CAB11832"/>
    <property type="gene ID" value="BSU_00560"/>
</dbReference>
<dbReference type="GeneID" id="11237815"/>
<dbReference type="GeneID" id="936975"/>
<dbReference type="KEGG" id="bsu:BSU00560"/>
<dbReference type="PATRIC" id="fig|224308.179.peg.56"/>
<dbReference type="eggNOG" id="COG2002">
    <property type="taxonomic scope" value="Bacteria"/>
</dbReference>
<dbReference type="InParanoid" id="P37554"/>
<dbReference type="OrthoDB" id="9782993at2"/>
<dbReference type="PhylomeDB" id="P37554"/>
<dbReference type="BioCyc" id="BSUB:BSU00560-MONOMER"/>
<dbReference type="EvolutionaryTrace" id="P37554"/>
<dbReference type="PRO" id="PR:P37554"/>
<dbReference type="Proteomes" id="UP000001570">
    <property type="component" value="Chromosome"/>
</dbReference>
<dbReference type="GO" id="GO:0003677">
    <property type="term" value="F:DNA binding"/>
    <property type="evidence" value="ECO:0007669"/>
    <property type="project" value="UniProtKB-KW"/>
</dbReference>
<dbReference type="GO" id="GO:0042802">
    <property type="term" value="F:identical protein binding"/>
    <property type="evidence" value="ECO:0000353"/>
    <property type="project" value="IntAct"/>
</dbReference>
<dbReference type="GO" id="GO:0030435">
    <property type="term" value="P:sporulation resulting in formation of a cellular spore"/>
    <property type="evidence" value="ECO:0007669"/>
    <property type="project" value="UniProtKB-KW"/>
</dbReference>
<dbReference type="FunFam" id="2.10.260.10:FF:000001">
    <property type="entry name" value="Stage V sporulation protein T"/>
    <property type="match status" value="1"/>
</dbReference>
<dbReference type="Gene3D" id="2.10.260.10">
    <property type="match status" value="1"/>
</dbReference>
<dbReference type="Gene3D" id="3.30.450.40">
    <property type="match status" value="1"/>
</dbReference>
<dbReference type="InterPro" id="IPR052731">
    <property type="entry name" value="B_subtilis_Trans_State_Reg"/>
</dbReference>
<dbReference type="InterPro" id="IPR029016">
    <property type="entry name" value="GAF-like_dom_sf"/>
</dbReference>
<dbReference type="InterPro" id="IPR014213">
    <property type="entry name" value="SpoVT"/>
</dbReference>
<dbReference type="InterPro" id="IPR007159">
    <property type="entry name" value="SpoVT-AbrB_dom"/>
</dbReference>
<dbReference type="InterPro" id="IPR037914">
    <property type="entry name" value="SpoVT-AbrB_sf"/>
</dbReference>
<dbReference type="NCBIfam" id="TIGR01439">
    <property type="entry name" value="lp_hng_hel_AbrB"/>
    <property type="match status" value="1"/>
</dbReference>
<dbReference type="NCBIfam" id="TIGR02851">
    <property type="entry name" value="spore_V_T"/>
    <property type="match status" value="1"/>
</dbReference>
<dbReference type="PANTHER" id="PTHR36432">
    <property type="match status" value="1"/>
</dbReference>
<dbReference type="PANTHER" id="PTHR36432:SF1">
    <property type="entry name" value="STAGE V SPORULATION PROTEIN T"/>
    <property type="match status" value="1"/>
</dbReference>
<dbReference type="Pfam" id="PF04014">
    <property type="entry name" value="MazE_antitoxin"/>
    <property type="match status" value="1"/>
</dbReference>
<dbReference type="Pfam" id="PF15714">
    <property type="entry name" value="SpoVT_C"/>
    <property type="match status" value="1"/>
</dbReference>
<dbReference type="PIRSF" id="PIRSF026579">
    <property type="entry name" value="Spore_V_T"/>
    <property type="match status" value="1"/>
</dbReference>
<dbReference type="SMART" id="SM00966">
    <property type="entry name" value="SpoVT_AbrB"/>
    <property type="match status" value="1"/>
</dbReference>
<dbReference type="SUPFAM" id="SSF89447">
    <property type="entry name" value="AbrB/MazE/MraZ-like"/>
    <property type="match status" value="1"/>
</dbReference>
<dbReference type="PROSITE" id="PS51740">
    <property type="entry name" value="SPOVT_ABRB"/>
    <property type="match status" value="1"/>
</dbReference>
<protein>
    <recommendedName>
        <fullName evidence="7">Stage V sporulation protein T</fullName>
    </recommendedName>
</protein>
<sequence>MKATGIVRRIDDLGRVVIPKEIRRTLRIREGDPLEIFVDRDGEVILKKYSPISELGDFAKEYADALYDSLGHSVLICDRDVYIAVSGSSKKDYLNKSISEMLERTMDQRSSVLESDAKSVQLVNGIDEDMNSYTVGPIVANGDPIGAVVIFSKDQTMGEVEHKAVETAAGFLARQMEQ</sequence>
<gene>
    <name evidence="6" type="primary">spoVT</name>
    <name type="synonym">yabL</name>
    <name type="ordered locus">BSU00560</name>
</gene>
<organism>
    <name type="scientific">Bacillus subtilis (strain 168)</name>
    <dbReference type="NCBI Taxonomy" id="224308"/>
    <lineage>
        <taxon>Bacteria</taxon>
        <taxon>Bacillati</taxon>
        <taxon>Bacillota</taxon>
        <taxon>Bacilli</taxon>
        <taxon>Bacillales</taxon>
        <taxon>Bacillaceae</taxon>
        <taxon>Bacillus</taxon>
    </lineage>
</organism>
<name>SPOVT_BACSU</name>
<accession>P37554</accession>
<proteinExistence type="evidence at protein level"/>
<reference key="1">
    <citation type="journal article" date="1994" name="DNA Res.">
        <title>Systematic sequencing of the 180 kilobase region of the Bacillus subtilis chromosome containing the replication origin.</title>
        <authorList>
            <person name="Ogasawara N."/>
            <person name="Nakai S."/>
            <person name="Yoshikawa H."/>
        </authorList>
    </citation>
    <scope>NUCLEOTIDE SEQUENCE [GENOMIC DNA]</scope>
    <source>
        <strain>168</strain>
    </source>
</reference>
<reference key="2">
    <citation type="journal article" date="1997" name="Nature">
        <title>The complete genome sequence of the Gram-positive bacterium Bacillus subtilis.</title>
        <authorList>
            <person name="Kunst F."/>
            <person name="Ogasawara N."/>
            <person name="Moszer I."/>
            <person name="Albertini A.M."/>
            <person name="Alloni G."/>
            <person name="Azevedo V."/>
            <person name="Bertero M.G."/>
            <person name="Bessieres P."/>
            <person name="Bolotin A."/>
            <person name="Borchert S."/>
            <person name="Borriss R."/>
            <person name="Boursier L."/>
            <person name="Brans A."/>
            <person name="Braun M."/>
            <person name="Brignell S.C."/>
            <person name="Bron S."/>
            <person name="Brouillet S."/>
            <person name="Bruschi C.V."/>
            <person name="Caldwell B."/>
            <person name="Capuano V."/>
            <person name="Carter N.M."/>
            <person name="Choi S.-K."/>
            <person name="Codani J.-J."/>
            <person name="Connerton I.F."/>
            <person name="Cummings N.J."/>
            <person name="Daniel R.A."/>
            <person name="Denizot F."/>
            <person name="Devine K.M."/>
            <person name="Duesterhoeft A."/>
            <person name="Ehrlich S.D."/>
            <person name="Emmerson P.T."/>
            <person name="Entian K.-D."/>
            <person name="Errington J."/>
            <person name="Fabret C."/>
            <person name="Ferrari E."/>
            <person name="Foulger D."/>
            <person name="Fritz C."/>
            <person name="Fujita M."/>
            <person name="Fujita Y."/>
            <person name="Fuma S."/>
            <person name="Galizzi A."/>
            <person name="Galleron N."/>
            <person name="Ghim S.-Y."/>
            <person name="Glaser P."/>
            <person name="Goffeau A."/>
            <person name="Golightly E.J."/>
            <person name="Grandi G."/>
            <person name="Guiseppi G."/>
            <person name="Guy B.J."/>
            <person name="Haga K."/>
            <person name="Haiech J."/>
            <person name="Harwood C.R."/>
            <person name="Henaut A."/>
            <person name="Hilbert H."/>
            <person name="Holsappel S."/>
            <person name="Hosono S."/>
            <person name="Hullo M.-F."/>
            <person name="Itaya M."/>
            <person name="Jones L.-M."/>
            <person name="Joris B."/>
            <person name="Karamata D."/>
            <person name="Kasahara Y."/>
            <person name="Klaerr-Blanchard M."/>
            <person name="Klein C."/>
            <person name="Kobayashi Y."/>
            <person name="Koetter P."/>
            <person name="Koningstein G."/>
            <person name="Krogh S."/>
            <person name="Kumano M."/>
            <person name="Kurita K."/>
            <person name="Lapidus A."/>
            <person name="Lardinois S."/>
            <person name="Lauber J."/>
            <person name="Lazarevic V."/>
            <person name="Lee S.-M."/>
            <person name="Levine A."/>
            <person name="Liu H."/>
            <person name="Masuda S."/>
            <person name="Mauel C."/>
            <person name="Medigue C."/>
            <person name="Medina N."/>
            <person name="Mellado R.P."/>
            <person name="Mizuno M."/>
            <person name="Moestl D."/>
            <person name="Nakai S."/>
            <person name="Noback M."/>
            <person name="Noone D."/>
            <person name="O'Reilly M."/>
            <person name="Ogawa K."/>
            <person name="Ogiwara A."/>
            <person name="Oudega B."/>
            <person name="Park S.-H."/>
            <person name="Parro V."/>
            <person name="Pohl T.M."/>
            <person name="Portetelle D."/>
            <person name="Porwollik S."/>
            <person name="Prescott A.M."/>
            <person name="Presecan E."/>
            <person name="Pujic P."/>
            <person name="Purnelle B."/>
            <person name="Rapoport G."/>
            <person name="Rey M."/>
            <person name="Reynolds S."/>
            <person name="Rieger M."/>
            <person name="Rivolta C."/>
            <person name="Rocha E."/>
            <person name="Roche B."/>
            <person name="Rose M."/>
            <person name="Sadaie Y."/>
            <person name="Sato T."/>
            <person name="Scanlan E."/>
            <person name="Schleich S."/>
            <person name="Schroeter R."/>
            <person name="Scoffone F."/>
            <person name="Sekiguchi J."/>
            <person name="Sekowska A."/>
            <person name="Seror S.J."/>
            <person name="Serror P."/>
            <person name="Shin B.-S."/>
            <person name="Soldo B."/>
            <person name="Sorokin A."/>
            <person name="Tacconi E."/>
            <person name="Takagi T."/>
            <person name="Takahashi H."/>
            <person name="Takemaru K."/>
            <person name="Takeuchi M."/>
            <person name="Tamakoshi A."/>
            <person name="Tanaka T."/>
            <person name="Terpstra P."/>
            <person name="Tognoni A."/>
            <person name="Tosato V."/>
            <person name="Uchiyama S."/>
            <person name="Vandenbol M."/>
            <person name="Vannier F."/>
            <person name="Vassarotti A."/>
            <person name="Viari A."/>
            <person name="Wambutt R."/>
            <person name="Wedler E."/>
            <person name="Wedler H."/>
            <person name="Weitzenegger T."/>
            <person name="Winters P."/>
            <person name="Wipat A."/>
            <person name="Yamamoto H."/>
            <person name="Yamane K."/>
            <person name="Yasumoto K."/>
            <person name="Yata K."/>
            <person name="Yoshida K."/>
            <person name="Yoshikawa H.-F."/>
            <person name="Zumstein E."/>
            <person name="Yoshikawa H."/>
            <person name="Danchin A."/>
        </authorList>
    </citation>
    <scope>NUCLEOTIDE SEQUENCE [LARGE SCALE GENOMIC DNA]</scope>
    <source>
        <strain>168</strain>
    </source>
</reference>
<reference key="3">
    <citation type="journal article" date="1996" name="J. Bacteriol.">
        <title>A compartmentalized regulator of developmental gene expression in Bacillus subtilis.</title>
        <authorList>
            <person name="Bagyan I."/>
            <person name="Hobot J."/>
            <person name="Cutting S.M."/>
        </authorList>
    </citation>
    <scope>FUNCTION</scope>
    <scope>INDUCTION</scope>
    <scope>DISRUPTION PHENOTYPE</scope>
</reference>
<reference key="4">
    <citation type="journal article" date="2004" name="FEMS Microbiol. Lett.">
        <title>DNA-binding studies on the Bacillus subtilis transcriptional regulator and AbrB homologue, SpoVT.</title>
        <authorList>
            <person name="Dong T.C."/>
            <person name="Cutting S.M."/>
            <person name="Lewis R.J."/>
        </authorList>
    </citation>
    <scope>SUBUNIT</scope>
    <scope>DOMAIN</scope>
    <scope>DNA-BINDING</scope>
</reference>
<reference key="5">
    <citation type="journal article" date="2012" name="J. Bacteriol.">
        <title>Effects of the SpoVT regulatory protein on the germination and germination protein levels of spores of Bacillus subtilis.</title>
        <authorList>
            <person name="Ramirez-Peralta A."/>
            <person name="Stewart K.A."/>
            <person name="Thomas S.K."/>
            <person name="Setlow B."/>
            <person name="Chen Z."/>
            <person name="Li Y.Q."/>
            <person name="Setlow P."/>
        </authorList>
    </citation>
    <scope>FUNCTION</scope>
    <scope>DISRUPTION PHENOTYPE</scope>
</reference>
<reference evidence="10" key="6">
    <citation type="journal article" date="2008" name="Structure">
        <title>Insights into the nature of DNA binding of AbrB-like transcription factors.</title>
        <authorList>
            <person name="Sullivan D.M."/>
            <person name="Bobay B.G."/>
            <person name="Kojetin D.J."/>
            <person name="Thompson R.J."/>
            <person name="Rance M."/>
            <person name="Strauch M.A."/>
            <person name="Cavanagh J."/>
        </authorList>
    </citation>
    <scope>STRUCTURE BY NMR OF 1-55</scope>
</reference>
<reference evidence="11 12" key="7">
    <citation type="journal article" date="2009" name="J. Mol. Biol.">
        <title>Crystal structure of SpoVT, the final modulator of gene expression during spore development in Bacillus subtilis.</title>
        <authorList>
            <person name="Asen I."/>
            <person name="Djuranovic S."/>
            <person name="Lupas A.N."/>
            <person name="Zeth K."/>
        </authorList>
    </citation>
    <scope>X-RAY CRYSTALLOGRAPHY (1.50 ANGSTROMS)</scope>
    <scope>SUBUNIT</scope>
    <scope>DOMAIN</scope>
</reference>
<feature type="chain" id="PRO_0000072088" description="Stage V sporulation protein T">
    <location>
        <begin position="1"/>
        <end position="178"/>
    </location>
</feature>
<feature type="domain" description="SpoVT-AbrB" evidence="1">
    <location>
        <begin position="5"/>
        <end position="51"/>
    </location>
</feature>
<feature type="region of interest" description="GAF-like" evidence="9">
    <location>
        <begin position="56"/>
        <end position="178"/>
    </location>
</feature>
<feature type="strand" evidence="14">
    <location>
        <begin position="6"/>
        <end position="9"/>
    </location>
</feature>
<feature type="strand" evidence="14">
    <location>
        <begin position="14"/>
        <end position="17"/>
    </location>
</feature>
<feature type="helix" evidence="14">
    <location>
        <begin position="20"/>
        <end position="25"/>
    </location>
</feature>
<feature type="strand" evidence="14">
    <location>
        <begin position="33"/>
        <end position="38"/>
    </location>
</feature>
<feature type="strand" evidence="14">
    <location>
        <begin position="44"/>
        <end position="48"/>
    </location>
</feature>
<feature type="helix" evidence="14">
    <location>
        <begin position="51"/>
        <end position="54"/>
    </location>
</feature>
<feature type="helix" evidence="13">
    <location>
        <begin position="58"/>
        <end position="70"/>
    </location>
</feature>
<feature type="strand" evidence="13">
    <location>
        <begin position="72"/>
        <end position="77"/>
    </location>
</feature>
<feature type="strand" evidence="13">
    <location>
        <begin position="79"/>
        <end position="88"/>
    </location>
</feature>
<feature type="helix" evidence="13">
    <location>
        <begin position="90"/>
        <end position="93"/>
    </location>
</feature>
<feature type="helix" evidence="13">
    <location>
        <begin position="100"/>
        <end position="108"/>
    </location>
</feature>
<feature type="strand" evidence="13">
    <location>
        <begin position="112"/>
        <end position="116"/>
    </location>
</feature>
<feature type="strand" evidence="13">
    <location>
        <begin position="118"/>
        <end position="123"/>
    </location>
</feature>
<feature type="strand" evidence="13">
    <location>
        <begin position="127"/>
        <end position="140"/>
    </location>
</feature>
<feature type="strand" evidence="13">
    <location>
        <begin position="143"/>
        <end position="155"/>
    </location>
</feature>
<feature type="helix" evidence="13">
    <location>
        <begin position="159"/>
        <end position="172"/>
    </location>
</feature>
<evidence type="ECO:0000255" key="1">
    <source>
        <dbReference type="PROSITE-ProRule" id="PRU01076"/>
    </source>
</evidence>
<evidence type="ECO:0000269" key="2">
    <source>
    </source>
</evidence>
<evidence type="ECO:0000269" key="3">
    <source>
    </source>
</evidence>
<evidence type="ECO:0000269" key="4">
    <source>
    </source>
</evidence>
<evidence type="ECO:0000269" key="5">
    <source>
    </source>
</evidence>
<evidence type="ECO:0000303" key="6">
    <source>
    </source>
</evidence>
<evidence type="ECO:0000305" key="7"/>
<evidence type="ECO:0000305" key="8">
    <source>
    </source>
</evidence>
<evidence type="ECO:0000305" key="9">
    <source>
    </source>
</evidence>
<evidence type="ECO:0007744" key="10">
    <source>
        <dbReference type="PDB" id="2RO5"/>
    </source>
</evidence>
<evidence type="ECO:0007744" key="11">
    <source>
        <dbReference type="PDB" id="2W1R"/>
    </source>
</evidence>
<evidence type="ECO:0007744" key="12">
    <source>
        <dbReference type="PDB" id="2W1T"/>
    </source>
</evidence>
<evidence type="ECO:0007829" key="13">
    <source>
        <dbReference type="PDB" id="2W1R"/>
    </source>
</evidence>
<evidence type="ECO:0007829" key="14">
    <source>
        <dbReference type="PDB" id="2W1T"/>
    </source>
</evidence>
<comment type="function">
    <text evidence="4 5">Transcriptional factor that positively regulates or negatively the expression of a large number of forespore-specific sigma G-dependent genes. May provide a mechanism of feedback control that is important for forespore development (PubMed:8755877). SpoVT levels during spore formation have a major impact on the germination and the resistance of the resultant spores (PubMed:22522895).</text>
</comment>
<comment type="subunit">
    <text evidence="3 8">Homotetramer (Probable) (PubMed:18996130). Two monomers dimerize via their N-terminal swapped-hairpin domains. These dimers further associate into tetramers through helical interactions between their C-terminal GAF-like domains (PubMed:18996130).</text>
</comment>
<comment type="interaction">
    <interactant intactId="EBI-15739529">
        <id>P37554</id>
    </interactant>
    <interactant intactId="EBI-15739529">
        <id>P37554</id>
        <label>spoVT</label>
    </interactant>
    <organismsDiffer>false</organismsDiffer>
    <experiments>2</experiments>
</comment>
<comment type="induction">
    <text evidence="5">Expression is regulated by the sporulation transcription factor sigma G.</text>
</comment>
<comment type="domain">
    <text evidence="2 3">The N-terminal domain binds DNA non-specifically and the C-terminal GAF-like domain is crucial to its correct folding and function. The non-specific DNA-binding activity of the N-terminal domain is modulated by the C-terminal domain, which perhaps in combination with another unknown factor, confers activity and specificity.</text>
</comment>
<comment type="disruption phenotype">
    <text evidence="4 5">Deletion of the gene leads to aberrantly formed spores (PubMed:8755877). Mutant spores release their dipicolinic acid (DPA) via germinant receptor (GR)-dependent germination more rapidly than wild-type spores. Spores are also more sensitive to UV radiation and outgrow slowly (PubMed:22522895).</text>
</comment>
<comment type="similarity">
    <text evidence="7">To B.subtilis AbrB and Abh.</text>
</comment>